<evidence type="ECO:0000255" key="1">
    <source>
        <dbReference type="HAMAP-Rule" id="MF_00001"/>
    </source>
</evidence>
<evidence type="ECO:0000305" key="2"/>
<sequence length="343" mass="37387">MTTDTSGRTGNPAAAAPAERFRYGFLKGNPQLTKNGELKHLLTIEGLPRAILNQILDTAEQFVSVTDREVKKVPLLRGKSVFNLFFENSTRTRTTFEIAAKRLSADVINLNINASSTSKGESLLDTINNLSAMHADLFVVRHASSGAPYLIAEHCAPHVHVINAGDGRHAHPTQGLLDMYTIRHYKRDFTKLRVAIVGDILHSRVARSDIHALTTLGVPEVRAIGPRTLLPGGLEQMGVRVFHNLDEGLRDVDVIIMLRLQNERMSGALLPSAQEYFKSWGLTPERLALAAPDAIVMHPGPMNRGVEIDSQVADGPQSVILNQVTFGIAVRMAVMGIVAGTSD</sequence>
<feature type="chain" id="PRO_0000329099" description="Aspartate carbamoyltransferase catalytic subunit">
    <location>
        <begin position="1"/>
        <end position="343"/>
    </location>
</feature>
<feature type="binding site" evidence="1">
    <location>
        <position position="91"/>
    </location>
    <ligand>
        <name>carbamoyl phosphate</name>
        <dbReference type="ChEBI" id="CHEBI:58228"/>
    </ligand>
</feature>
<feature type="binding site" evidence="1">
    <location>
        <position position="92"/>
    </location>
    <ligand>
        <name>carbamoyl phosphate</name>
        <dbReference type="ChEBI" id="CHEBI:58228"/>
    </ligand>
</feature>
<feature type="binding site" evidence="1">
    <location>
        <position position="119"/>
    </location>
    <ligand>
        <name>L-aspartate</name>
        <dbReference type="ChEBI" id="CHEBI:29991"/>
    </ligand>
</feature>
<feature type="binding site" evidence="1">
    <location>
        <position position="141"/>
    </location>
    <ligand>
        <name>carbamoyl phosphate</name>
        <dbReference type="ChEBI" id="CHEBI:58228"/>
    </ligand>
</feature>
<feature type="binding site" evidence="1">
    <location>
        <position position="171"/>
    </location>
    <ligand>
        <name>carbamoyl phosphate</name>
        <dbReference type="ChEBI" id="CHEBI:58228"/>
    </ligand>
</feature>
<feature type="binding site" evidence="1">
    <location>
        <position position="174"/>
    </location>
    <ligand>
        <name>carbamoyl phosphate</name>
        <dbReference type="ChEBI" id="CHEBI:58228"/>
    </ligand>
</feature>
<feature type="binding site" evidence="1">
    <location>
        <position position="204"/>
    </location>
    <ligand>
        <name>L-aspartate</name>
        <dbReference type="ChEBI" id="CHEBI:29991"/>
    </ligand>
</feature>
<feature type="binding site" evidence="1">
    <location>
        <position position="259"/>
    </location>
    <ligand>
        <name>L-aspartate</name>
        <dbReference type="ChEBI" id="CHEBI:29991"/>
    </ligand>
</feature>
<feature type="binding site" evidence="1">
    <location>
        <position position="300"/>
    </location>
    <ligand>
        <name>carbamoyl phosphate</name>
        <dbReference type="ChEBI" id="CHEBI:58228"/>
    </ligand>
</feature>
<feature type="binding site" evidence="1">
    <location>
        <position position="301"/>
    </location>
    <ligand>
        <name>carbamoyl phosphate</name>
        <dbReference type="ChEBI" id="CHEBI:58228"/>
    </ligand>
</feature>
<accession>A3MMA7</accession>
<proteinExistence type="inferred from homology"/>
<gene>
    <name evidence="1" type="primary">pyrB</name>
    <name type="ordered locus">BMA10247_1856</name>
</gene>
<keyword id="KW-0665">Pyrimidine biosynthesis</keyword>
<keyword id="KW-0808">Transferase</keyword>
<name>PYRB_BURM7</name>
<dbReference type="EC" id="2.1.3.2" evidence="1"/>
<dbReference type="EMBL" id="CP000548">
    <property type="protein sequence ID" value="ABO07011.1"/>
    <property type="status" value="ALT_INIT"/>
    <property type="molecule type" value="Genomic_DNA"/>
</dbReference>
<dbReference type="RefSeq" id="WP_004534003.1">
    <property type="nucleotide sequence ID" value="NZ_CP007802.1"/>
</dbReference>
<dbReference type="SMR" id="A3MMA7"/>
<dbReference type="KEGG" id="bmaz:BM44_1346"/>
<dbReference type="KEGG" id="bmn:BMA10247_1856"/>
<dbReference type="PATRIC" id="fig|320389.8.peg.1507"/>
<dbReference type="UniPathway" id="UPA00070">
    <property type="reaction ID" value="UER00116"/>
</dbReference>
<dbReference type="GO" id="GO:0005829">
    <property type="term" value="C:cytosol"/>
    <property type="evidence" value="ECO:0007669"/>
    <property type="project" value="TreeGrafter"/>
</dbReference>
<dbReference type="GO" id="GO:0016597">
    <property type="term" value="F:amino acid binding"/>
    <property type="evidence" value="ECO:0007669"/>
    <property type="project" value="InterPro"/>
</dbReference>
<dbReference type="GO" id="GO:0004070">
    <property type="term" value="F:aspartate carbamoyltransferase activity"/>
    <property type="evidence" value="ECO:0007669"/>
    <property type="project" value="UniProtKB-UniRule"/>
</dbReference>
<dbReference type="GO" id="GO:0006207">
    <property type="term" value="P:'de novo' pyrimidine nucleobase biosynthetic process"/>
    <property type="evidence" value="ECO:0007669"/>
    <property type="project" value="InterPro"/>
</dbReference>
<dbReference type="GO" id="GO:0044205">
    <property type="term" value="P:'de novo' UMP biosynthetic process"/>
    <property type="evidence" value="ECO:0007669"/>
    <property type="project" value="UniProtKB-UniRule"/>
</dbReference>
<dbReference type="GO" id="GO:0006520">
    <property type="term" value="P:amino acid metabolic process"/>
    <property type="evidence" value="ECO:0007669"/>
    <property type="project" value="InterPro"/>
</dbReference>
<dbReference type="FunFam" id="3.40.50.1370:FF:000007">
    <property type="entry name" value="Aspartate carbamoyltransferase"/>
    <property type="match status" value="1"/>
</dbReference>
<dbReference type="Gene3D" id="3.40.50.1370">
    <property type="entry name" value="Aspartate/ornithine carbamoyltransferase"/>
    <property type="match status" value="2"/>
</dbReference>
<dbReference type="HAMAP" id="MF_00001">
    <property type="entry name" value="Asp_carb_tr"/>
    <property type="match status" value="1"/>
</dbReference>
<dbReference type="InterPro" id="IPR006132">
    <property type="entry name" value="Asp/Orn_carbamoyltranf_P-bd"/>
</dbReference>
<dbReference type="InterPro" id="IPR006130">
    <property type="entry name" value="Asp/Orn_carbamoylTrfase"/>
</dbReference>
<dbReference type="InterPro" id="IPR036901">
    <property type="entry name" value="Asp/Orn_carbamoylTrfase_sf"/>
</dbReference>
<dbReference type="InterPro" id="IPR002082">
    <property type="entry name" value="Asp_carbamoyltransf"/>
</dbReference>
<dbReference type="InterPro" id="IPR006131">
    <property type="entry name" value="Asp_carbamoyltransf_Asp/Orn-bd"/>
</dbReference>
<dbReference type="NCBIfam" id="TIGR00670">
    <property type="entry name" value="asp_carb_tr"/>
    <property type="match status" value="1"/>
</dbReference>
<dbReference type="NCBIfam" id="NF002032">
    <property type="entry name" value="PRK00856.1"/>
    <property type="match status" value="1"/>
</dbReference>
<dbReference type="PANTHER" id="PTHR45753:SF6">
    <property type="entry name" value="ASPARTATE CARBAMOYLTRANSFERASE"/>
    <property type="match status" value="1"/>
</dbReference>
<dbReference type="PANTHER" id="PTHR45753">
    <property type="entry name" value="ORNITHINE CARBAMOYLTRANSFERASE, MITOCHONDRIAL"/>
    <property type="match status" value="1"/>
</dbReference>
<dbReference type="Pfam" id="PF00185">
    <property type="entry name" value="OTCace"/>
    <property type="match status" value="1"/>
</dbReference>
<dbReference type="Pfam" id="PF02729">
    <property type="entry name" value="OTCace_N"/>
    <property type="match status" value="1"/>
</dbReference>
<dbReference type="PRINTS" id="PR00100">
    <property type="entry name" value="AOTCASE"/>
</dbReference>
<dbReference type="PRINTS" id="PR00101">
    <property type="entry name" value="ATCASE"/>
</dbReference>
<dbReference type="SUPFAM" id="SSF53671">
    <property type="entry name" value="Aspartate/ornithine carbamoyltransferase"/>
    <property type="match status" value="1"/>
</dbReference>
<dbReference type="PROSITE" id="PS00097">
    <property type="entry name" value="CARBAMOYLTRANSFERASE"/>
    <property type="match status" value="1"/>
</dbReference>
<comment type="function">
    <text evidence="1">Catalyzes the condensation of carbamoyl phosphate and aspartate to form carbamoyl aspartate and inorganic phosphate, the committed step in the de novo pyrimidine nucleotide biosynthesis pathway.</text>
</comment>
<comment type="catalytic activity">
    <reaction evidence="1">
        <text>carbamoyl phosphate + L-aspartate = N-carbamoyl-L-aspartate + phosphate + H(+)</text>
        <dbReference type="Rhea" id="RHEA:20013"/>
        <dbReference type="ChEBI" id="CHEBI:15378"/>
        <dbReference type="ChEBI" id="CHEBI:29991"/>
        <dbReference type="ChEBI" id="CHEBI:32814"/>
        <dbReference type="ChEBI" id="CHEBI:43474"/>
        <dbReference type="ChEBI" id="CHEBI:58228"/>
        <dbReference type="EC" id="2.1.3.2"/>
    </reaction>
</comment>
<comment type="pathway">
    <text evidence="1">Pyrimidine metabolism; UMP biosynthesis via de novo pathway; (S)-dihydroorotate from bicarbonate: step 2/3.</text>
</comment>
<comment type="subunit">
    <text evidence="1">Heterododecamer (2C3:3R2) of six catalytic PyrB chains organized as two trimers (C3), and six regulatory PyrI chains organized as three dimers (R2).</text>
</comment>
<comment type="similarity">
    <text evidence="1">Belongs to the aspartate/ornithine carbamoyltransferase superfamily. ATCase family.</text>
</comment>
<comment type="sequence caution" evidence="2">
    <conflict type="erroneous initiation">
        <sequence resource="EMBL-CDS" id="ABO07011"/>
    </conflict>
</comment>
<organism>
    <name type="scientific">Burkholderia mallei (strain NCTC 10247)</name>
    <dbReference type="NCBI Taxonomy" id="320389"/>
    <lineage>
        <taxon>Bacteria</taxon>
        <taxon>Pseudomonadati</taxon>
        <taxon>Pseudomonadota</taxon>
        <taxon>Betaproteobacteria</taxon>
        <taxon>Burkholderiales</taxon>
        <taxon>Burkholderiaceae</taxon>
        <taxon>Burkholderia</taxon>
        <taxon>pseudomallei group</taxon>
    </lineage>
</organism>
<protein>
    <recommendedName>
        <fullName evidence="1">Aspartate carbamoyltransferase catalytic subunit</fullName>
        <ecNumber evidence="1">2.1.3.2</ecNumber>
    </recommendedName>
    <alternativeName>
        <fullName evidence="1">Aspartate transcarbamylase</fullName>
        <shortName evidence="1">ATCase</shortName>
    </alternativeName>
</protein>
<reference key="1">
    <citation type="journal article" date="2010" name="Genome Biol. Evol.">
        <title>Continuing evolution of Burkholderia mallei through genome reduction and large-scale rearrangements.</title>
        <authorList>
            <person name="Losada L."/>
            <person name="Ronning C.M."/>
            <person name="DeShazer D."/>
            <person name="Woods D."/>
            <person name="Fedorova N."/>
            <person name="Kim H.S."/>
            <person name="Shabalina S.A."/>
            <person name="Pearson T.R."/>
            <person name="Brinkac L."/>
            <person name="Tan P."/>
            <person name="Nandi T."/>
            <person name="Crabtree J."/>
            <person name="Badger J."/>
            <person name="Beckstrom-Sternberg S."/>
            <person name="Saqib M."/>
            <person name="Schutzer S.E."/>
            <person name="Keim P."/>
            <person name="Nierman W.C."/>
        </authorList>
    </citation>
    <scope>NUCLEOTIDE SEQUENCE [LARGE SCALE GENOMIC DNA]</scope>
    <source>
        <strain>NCTC 10247</strain>
    </source>
</reference>